<name>PDXS_MYCS2</name>
<reference key="1">
    <citation type="submission" date="2006-10" db="EMBL/GenBank/DDBJ databases">
        <authorList>
            <person name="Fleischmann R.D."/>
            <person name="Dodson R.J."/>
            <person name="Haft D.H."/>
            <person name="Merkel J.S."/>
            <person name="Nelson W.C."/>
            <person name="Fraser C.M."/>
        </authorList>
    </citation>
    <scope>NUCLEOTIDE SEQUENCE [LARGE SCALE GENOMIC DNA]</scope>
    <source>
        <strain>ATCC 700084 / mc(2)155</strain>
    </source>
</reference>
<reference key="2">
    <citation type="journal article" date="2007" name="Genome Biol.">
        <title>Interrupted coding sequences in Mycobacterium smegmatis: authentic mutations or sequencing errors?</title>
        <authorList>
            <person name="Deshayes C."/>
            <person name="Perrodou E."/>
            <person name="Gallien S."/>
            <person name="Euphrasie D."/>
            <person name="Schaeffer C."/>
            <person name="Van-Dorsselaer A."/>
            <person name="Poch O."/>
            <person name="Lecompte O."/>
            <person name="Reyrat J.-M."/>
        </authorList>
    </citation>
    <scope>NUCLEOTIDE SEQUENCE [LARGE SCALE GENOMIC DNA]</scope>
    <source>
        <strain>ATCC 700084 / mc(2)155</strain>
    </source>
</reference>
<reference key="3">
    <citation type="journal article" date="2009" name="Genome Res.">
        <title>Ortho-proteogenomics: multiple proteomes investigation through orthology and a new MS-based protocol.</title>
        <authorList>
            <person name="Gallien S."/>
            <person name="Perrodou E."/>
            <person name="Carapito C."/>
            <person name="Deshayes C."/>
            <person name="Reyrat J.-M."/>
            <person name="Van Dorsselaer A."/>
            <person name="Poch O."/>
            <person name="Schaeffer C."/>
            <person name="Lecompte O."/>
        </authorList>
    </citation>
    <scope>NUCLEOTIDE SEQUENCE [LARGE SCALE GENOMIC DNA]</scope>
    <source>
        <strain>ATCC 700084 / mc(2)155</strain>
    </source>
</reference>
<proteinExistence type="inferred from homology"/>
<gene>
    <name evidence="1" type="primary">pdxS</name>
    <name type="ordered locus">MSMEG_2937</name>
    <name type="ordered locus">MSMEI_2863</name>
</gene>
<organism>
    <name type="scientific">Mycolicibacterium smegmatis (strain ATCC 700084 / mc(2)155)</name>
    <name type="common">Mycobacterium smegmatis</name>
    <dbReference type="NCBI Taxonomy" id="246196"/>
    <lineage>
        <taxon>Bacteria</taxon>
        <taxon>Bacillati</taxon>
        <taxon>Actinomycetota</taxon>
        <taxon>Actinomycetes</taxon>
        <taxon>Mycobacteriales</taxon>
        <taxon>Mycobacteriaceae</taxon>
        <taxon>Mycolicibacterium</taxon>
    </lineage>
</organism>
<protein>
    <recommendedName>
        <fullName evidence="1">Pyridoxal 5'-phosphate synthase subunit PdxS</fullName>
        <shortName evidence="1">PLP synthase subunit PdxS</shortName>
        <ecNumber evidence="1">4.3.3.6</ecNumber>
    </recommendedName>
    <alternativeName>
        <fullName evidence="1">Pdx1</fullName>
    </alternativeName>
</protein>
<comment type="function">
    <text evidence="1">Catalyzes the formation of pyridoxal 5'-phosphate from ribose 5-phosphate (RBP), glyceraldehyde 3-phosphate (G3P) and ammonia. The ammonia is provided by the PdxT subunit. Can also use ribulose 5-phosphate and dihydroxyacetone phosphate as substrates, resulting from enzyme-catalyzed isomerization of RBP and G3P, respectively.</text>
</comment>
<comment type="catalytic activity">
    <reaction evidence="1">
        <text>aldehydo-D-ribose 5-phosphate + D-glyceraldehyde 3-phosphate + L-glutamine = pyridoxal 5'-phosphate + L-glutamate + phosphate + 3 H2O + H(+)</text>
        <dbReference type="Rhea" id="RHEA:31507"/>
        <dbReference type="ChEBI" id="CHEBI:15377"/>
        <dbReference type="ChEBI" id="CHEBI:15378"/>
        <dbReference type="ChEBI" id="CHEBI:29985"/>
        <dbReference type="ChEBI" id="CHEBI:43474"/>
        <dbReference type="ChEBI" id="CHEBI:58273"/>
        <dbReference type="ChEBI" id="CHEBI:58359"/>
        <dbReference type="ChEBI" id="CHEBI:59776"/>
        <dbReference type="ChEBI" id="CHEBI:597326"/>
        <dbReference type="EC" id="4.3.3.6"/>
    </reaction>
</comment>
<comment type="pathway">
    <text evidence="1">Cofactor biosynthesis; pyridoxal 5'-phosphate biosynthesis.</text>
</comment>
<comment type="subunit">
    <text evidence="1">In the presence of PdxT, forms a dodecamer of heterodimers.</text>
</comment>
<comment type="similarity">
    <text evidence="1">Belongs to the PdxS/SNZ family.</text>
</comment>
<dbReference type="EC" id="4.3.3.6" evidence="1"/>
<dbReference type="EMBL" id="CP000480">
    <property type="protein sequence ID" value="ABK71063.1"/>
    <property type="molecule type" value="Genomic_DNA"/>
</dbReference>
<dbReference type="EMBL" id="CP001663">
    <property type="protein sequence ID" value="AFP39327.1"/>
    <property type="molecule type" value="Genomic_DNA"/>
</dbReference>
<dbReference type="RefSeq" id="WP_011728705.1">
    <property type="nucleotide sequence ID" value="NZ_SIJM01000002.1"/>
</dbReference>
<dbReference type="RefSeq" id="YP_887256.1">
    <property type="nucleotide sequence ID" value="NC_008596.1"/>
</dbReference>
<dbReference type="SMR" id="A0QWG8"/>
<dbReference type="STRING" id="246196.MSMEG_2937"/>
<dbReference type="PaxDb" id="246196-MSMEI_2863"/>
<dbReference type="GeneID" id="93457717"/>
<dbReference type="KEGG" id="msb:LJ00_14615"/>
<dbReference type="KEGG" id="msg:MSMEI_2863"/>
<dbReference type="KEGG" id="msm:MSMEG_2937"/>
<dbReference type="PATRIC" id="fig|246196.19.peg.2900"/>
<dbReference type="eggNOG" id="COG0214">
    <property type="taxonomic scope" value="Bacteria"/>
</dbReference>
<dbReference type="OrthoDB" id="9772545at2"/>
<dbReference type="UniPathway" id="UPA00245"/>
<dbReference type="Proteomes" id="UP000000757">
    <property type="component" value="Chromosome"/>
</dbReference>
<dbReference type="Proteomes" id="UP000006158">
    <property type="component" value="Chromosome"/>
</dbReference>
<dbReference type="GO" id="GO:0036381">
    <property type="term" value="F:pyridoxal 5'-phosphate synthase (glutamine hydrolysing) activity"/>
    <property type="evidence" value="ECO:0007669"/>
    <property type="project" value="UniProtKB-UniRule"/>
</dbReference>
<dbReference type="GO" id="GO:0006520">
    <property type="term" value="P:amino acid metabolic process"/>
    <property type="evidence" value="ECO:0007669"/>
    <property type="project" value="TreeGrafter"/>
</dbReference>
<dbReference type="GO" id="GO:0042823">
    <property type="term" value="P:pyridoxal phosphate biosynthetic process"/>
    <property type="evidence" value="ECO:0007669"/>
    <property type="project" value="UniProtKB-UniRule"/>
</dbReference>
<dbReference type="GO" id="GO:0008615">
    <property type="term" value="P:pyridoxine biosynthetic process"/>
    <property type="evidence" value="ECO:0007669"/>
    <property type="project" value="TreeGrafter"/>
</dbReference>
<dbReference type="CDD" id="cd04727">
    <property type="entry name" value="pdxS"/>
    <property type="match status" value="1"/>
</dbReference>
<dbReference type="FunFam" id="3.20.20.70:FF:000001">
    <property type="entry name" value="Pyridoxine biosynthesis protein PDX1"/>
    <property type="match status" value="1"/>
</dbReference>
<dbReference type="Gene3D" id="3.20.20.70">
    <property type="entry name" value="Aldolase class I"/>
    <property type="match status" value="1"/>
</dbReference>
<dbReference type="HAMAP" id="MF_01824">
    <property type="entry name" value="PdxS"/>
    <property type="match status" value="1"/>
</dbReference>
<dbReference type="InterPro" id="IPR013785">
    <property type="entry name" value="Aldolase_TIM"/>
</dbReference>
<dbReference type="InterPro" id="IPR001852">
    <property type="entry name" value="PdxS/SNZ"/>
</dbReference>
<dbReference type="InterPro" id="IPR033755">
    <property type="entry name" value="PdxS/SNZ_N"/>
</dbReference>
<dbReference type="InterPro" id="IPR011060">
    <property type="entry name" value="RibuloseP-bd_barrel"/>
</dbReference>
<dbReference type="NCBIfam" id="NF003215">
    <property type="entry name" value="PRK04180.1"/>
    <property type="match status" value="1"/>
</dbReference>
<dbReference type="NCBIfam" id="TIGR00343">
    <property type="entry name" value="pyridoxal 5'-phosphate synthase lyase subunit PdxS"/>
    <property type="match status" value="1"/>
</dbReference>
<dbReference type="PANTHER" id="PTHR31829">
    <property type="entry name" value="PYRIDOXAL 5'-PHOSPHATE SYNTHASE SUBUNIT SNZ1-RELATED"/>
    <property type="match status" value="1"/>
</dbReference>
<dbReference type="PANTHER" id="PTHR31829:SF0">
    <property type="entry name" value="PYRIDOXAL 5'-PHOSPHATE SYNTHASE SUBUNIT SNZ1-RELATED"/>
    <property type="match status" value="1"/>
</dbReference>
<dbReference type="Pfam" id="PF01680">
    <property type="entry name" value="SOR_SNZ"/>
    <property type="match status" value="1"/>
</dbReference>
<dbReference type="PIRSF" id="PIRSF029271">
    <property type="entry name" value="Pdx1"/>
    <property type="match status" value="1"/>
</dbReference>
<dbReference type="SUPFAM" id="SSF51366">
    <property type="entry name" value="Ribulose-phoshate binding barrel"/>
    <property type="match status" value="1"/>
</dbReference>
<dbReference type="PROSITE" id="PS01235">
    <property type="entry name" value="PDXS_SNZ_1"/>
    <property type="match status" value="1"/>
</dbReference>
<dbReference type="PROSITE" id="PS51129">
    <property type="entry name" value="PDXS_SNZ_2"/>
    <property type="match status" value="1"/>
</dbReference>
<evidence type="ECO:0000255" key="1">
    <source>
        <dbReference type="HAMAP-Rule" id="MF_01824"/>
    </source>
</evidence>
<keyword id="KW-0456">Lyase</keyword>
<keyword id="KW-0663">Pyridoxal phosphate</keyword>
<keyword id="KW-1185">Reference proteome</keyword>
<keyword id="KW-0704">Schiff base</keyword>
<feature type="chain" id="PRO_1000070390" description="Pyridoxal 5'-phosphate synthase subunit PdxS">
    <location>
        <begin position="1"/>
        <end position="303"/>
    </location>
</feature>
<feature type="active site" description="Schiff-base intermediate with D-ribose 5-phosphate" evidence="1">
    <location>
        <position position="90"/>
    </location>
</feature>
<feature type="binding site" evidence="1">
    <location>
        <position position="33"/>
    </location>
    <ligand>
        <name>D-ribose 5-phosphate</name>
        <dbReference type="ChEBI" id="CHEBI:78346"/>
    </ligand>
</feature>
<feature type="binding site" evidence="1">
    <location>
        <position position="162"/>
    </location>
    <ligand>
        <name>D-ribose 5-phosphate</name>
        <dbReference type="ChEBI" id="CHEBI:78346"/>
    </ligand>
</feature>
<feature type="binding site" evidence="1">
    <location>
        <position position="174"/>
    </location>
    <ligand>
        <name>D-glyceraldehyde 3-phosphate</name>
        <dbReference type="ChEBI" id="CHEBI:59776"/>
    </ligand>
</feature>
<feature type="binding site" evidence="1">
    <location>
        <position position="223"/>
    </location>
    <ligand>
        <name>D-ribose 5-phosphate</name>
        <dbReference type="ChEBI" id="CHEBI:78346"/>
    </ligand>
</feature>
<feature type="binding site" evidence="1">
    <location>
        <begin position="244"/>
        <end position="245"/>
    </location>
    <ligand>
        <name>D-ribose 5-phosphate</name>
        <dbReference type="ChEBI" id="CHEBI:78346"/>
    </ligand>
</feature>
<sequence length="303" mass="32103">METAAQNGSSNQTGTARVKRGMAEMLKGGVIMDVVTPEQARIAEAAGAVAVMALERVPADIRAQGGVSRMSDPDMIEGIIDAVTIPVMAKARIGHFVEAQILQSLGVDYVDESEVLTPADYTNHIDKWKFTVPFVCGATNLGEALRRITEGAAMIRSKGEAGTGDVSNATTHMRKIGGEIRRLTSMSEDELYVAAKELQAPYELVVEVARAGKLPVTLFTAGGIATPADAAMMMQLGAEGVFVGSGIFKSGNPEQRAAAIVKATTFYDDPDVLAKVSRGLGEAMVGINVEEIAQPHRLAERGW</sequence>
<accession>A0QWG8</accession>
<accession>I7G0X5</accession>